<organism>
    <name type="scientific">Homarus gammarus</name>
    <name type="common">European lobster</name>
    <name type="synonym">Homarus vulgaris</name>
    <dbReference type="NCBI Taxonomy" id="6707"/>
    <lineage>
        <taxon>Eukaryota</taxon>
        <taxon>Metazoa</taxon>
        <taxon>Ecdysozoa</taxon>
        <taxon>Arthropoda</taxon>
        <taxon>Crustacea</taxon>
        <taxon>Multicrustacea</taxon>
        <taxon>Malacostraca</taxon>
        <taxon>Eumalacostraca</taxon>
        <taxon>Eucarida</taxon>
        <taxon>Decapoda</taxon>
        <taxon>Pleocyemata</taxon>
        <taxon>Astacidea</taxon>
        <taxon>Nephropoidea</taxon>
        <taxon>Nephropidae</taxon>
        <taxon>Homarus</taxon>
    </lineage>
</organism>
<protein>
    <recommendedName>
        <fullName>Arginine kinase</fullName>
        <shortName>AK</shortName>
        <ecNumber>2.7.3.3</ecNumber>
    </recommendedName>
</protein>
<evidence type="ECO:0000250" key="1">
    <source>
        <dbReference type="UniProtKB" id="Q004B5"/>
    </source>
</evidence>
<evidence type="ECO:0000255" key="2">
    <source>
        <dbReference type="PROSITE-ProRule" id="PRU00842"/>
    </source>
</evidence>
<evidence type="ECO:0000255" key="3">
    <source>
        <dbReference type="PROSITE-ProRule" id="PRU00843"/>
    </source>
</evidence>
<evidence type="ECO:0000269" key="4">
    <source>
    </source>
</evidence>
<dbReference type="EC" id="2.7.3.3"/>
<dbReference type="EMBL" id="X68703">
    <property type="protein sequence ID" value="CAA48654.1"/>
    <property type="molecule type" value="mRNA"/>
</dbReference>
<dbReference type="PIR" id="A48590">
    <property type="entry name" value="AKLO"/>
</dbReference>
<dbReference type="SMR" id="P14208"/>
<dbReference type="Allergome" id="791">
    <property type="allergen name" value="Hom g 2"/>
</dbReference>
<dbReference type="iPTMnet" id="P14208"/>
<dbReference type="EnsemblMetazoa" id="ENSHGAT00000075324">
    <property type="protein sequence ID" value="ENSHGAP00000017082"/>
    <property type="gene ID" value="ENSHGAG00000017123"/>
</dbReference>
<dbReference type="GO" id="GO:0005615">
    <property type="term" value="C:extracellular space"/>
    <property type="evidence" value="ECO:0007669"/>
    <property type="project" value="TreeGrafter"/>
</dbReference>
<dbReference type="GO" id="GO:0004054">
    <property type="term" value="F:arginine kinase activity"/>
    <property type="evidence" value="ECO:0000250"/>
    <property type="project" value="UniProtKB"/>
</dbReference>
<dbReference type="GO" id="GO:0005524">
    <property type="term" value="F:ATP binding"/>
    <property type="evidence" value="ECO:0007669"/>
    <property type="project" value="UniProtKB-KW"/>
</dbReference>
<dbReference type="GO" id="GO:0004111">
    <property type="term" value="F:creatine kinase activity"/>
    <property type="evidence" value="ECO:0007669"/>
    <property type="project" value="InterPro"/>
</dbReference>
<dbReference type="GO" id="GO:0046314">
    <property type="term" value="P:phosphocreatine biosynthetic process"/>
    <property type="evidence" value="ECO:0007669"/>
    <property type="project" value="InterPro"/>
</dbReference>
<dbReference type="CDD" id="cd07932">
    <property type="entry name" value="arginine_kinase_like"/>
    <property type="match status" value="1"/>
</dbReference>
<dbReference type="FunFam" id="3.30.590.10:FF:000006">
    <property type="entry name" value="Arginine kinase 1"/>
    <property type="match status" value="1"/>
</dbReference>
<dbReference type="FunFam" id="1.10.135.10:FF:000003">
    <property type="entry name" value="Three-domain arginine kinase"/>
    <property type="match status" value="1"/>
</dbReference>
<dbReference type="Gene3D" id="1.10.135.10">
    <property type="entry name" value="ATP:guanido phosphotransferase, N-terminal domain"/>
    <property type="match status" value="1"/>
</dbReference>
<dbReference type="Gene3D" id="3.30.590.10">
    <property type="entry name" value="Glutamine synthetase/guanido kinase, catalytic domain"/>
    <property type="match status" value="1"/>
</dbReference>
<dbReference type="InterPro" id="IPR000749">
    <property type="entry name" value="ATP-guanido_PTrfase"/>
</dbReference>
<dbReference type="InterPro" id="IPR022415">
    <property type="entry name" value="ATP-guanido_PTrfase_AS"/>
</dbReference>
<dbReference type="InterPro" id="IPR022414">
    <property type="entry name" value="ATP-guanido_PTrfase_cat"/>
</dbReference>
<dbReference type="InterPro" id="IPR022413">
    <property type="entry name" value="ATP-guanido_PTrfase_N"/>
</dbReference>
<dbReference type="InterPro" id="IPR036802">
    <property type="entry name" value="ATP-guanido_PTrfase_N_sf"/>
</dbReference>
<dbReference type="InterPro" id="IPR014746">
    <property type="entry name" value="Gln_synth/guanido_kin_cat_dom"/>
</dbReference>
<dbReference type="PANTHER" id="PTHR11547:SF38">
    <property type="entry name" value="ARGININE KINASE 1-RELATED"/>
    <property type="match status" value="1"/>
</dbReference>
<dbReference type="PANTHER" id="PTHR11547">
    <property type="entry name" value="ARGININE OR CREATINE KINASE"/>
    <property type="match status" value="1"/>
</dbReference>
<dbReference type="Pfam" id="PF00217">
    <property type="entry name" value="ATP-gua_Ptrans"/>
    <property type="match status" value="1"/>
</dbReference>
<dbReference type="Pfam" id="PF02807">
    <property type="entry name" value="ATP-gua_PtransN"/>
    <property type="match status" value="1"/>
</dbReference>
<dbReference type="SUPFAM" id="SSF55931">
    <property type="entry name" value="Glutamine synthetase/guanido kinase"/>
    <property type="match status" value="1"/>
</dbReference>
<dbReference type="SUPFAM" id="SSF48034">
    <property type="entry name" value="Guanido kinase N-terminal domain"/>
    <property type="match status" value="1"/>
</dbReference>
<dbReference type="PROSITE" id="PS00112">
    <property type="entry name" value="PHOSPHAGEN_KINASE"/>
    <property type="match status" value="1"/>
</dbReference>
<dbReference type="PROSITE" id="PS51510">
    <property type="entry name" value="PHOSPHAGEN_KINASE_C"/>
    <property type="match status" value="1"/>
</dbReference>
<dbReference type="PROSITE" id="PS51509">
    <property type="entry name" value="PHOSPHAGEN_KINASE_N"/>
    <property type="match status" value="1"/>
</dbReference>
<proteinExistence type="evidence at protein level"/>
<comment type="catalytic activity">
    <reaction>
        <text>L-arginine + ATP = N(omega)-phospho-L-arginine + ADP + H(+)</text>
        <dbReference type="Rhea" id="RHEA:22940"/>
        <dbReference type="ChEBI" id="CHEBI:15378"/>
        <dbReference type="ChEBI" id="CHEBI:30616"/>
        <dbReference type="ChEBI" id="CHEBI:32682"/>
        <dbReference type="ChEBI" id="CHEBI:58477"/>
        <dbReference type="ChEBI" id="CHEBI:456216"/>
        <dbReference type="EC" id="2.7.3.3"/>
    </reaction>
</comment>
<comment type="similarity">
    <text evidence="2 3">Belongs to the ATP:guanido phosphotransferase family.</text>
</comment>
<name>KARG_HOMGA</name>
<reference key="1">
    <citation type="journal article" date="1993" name="J. Biol. Chem.">
        <title>Cloning and sequence analysis of the cDNA for arginine kinase of lobster muscle.</title>
        <authorList>
            <person name="Dumas C."/>
            <person name="Camonis J."/>
        </authorList>
    </citation>
    <scope>NUCLEOTIDE SEQUENCE [MRNA]</scope>
    <source>
        <tissue>Muscle</tissue>
    </source>
</reference>
<reference key="2">
    <citation type="journal article" date="1981" name="Int. J. Pept. Protein Res.">
        <title>Primary structure of lobster-muscle arginine kinase. Amino and carboxyl-terminal structure of the enzyme and complete alignment of the cyanogen-bromide peptides.</title>
        <authorList>
            <person name="Regnouf F."/>
            <person name="Kassab R."/>
            <person name="Debuire B."/>
            <person name="Richard C."/>
            <person name="Han K.K."/>
        </authorList>
    </citation>
    <scope>PRELIMINARY PARTIAL PROTEIN SEQUENCE</scope>
    <scope>ACETYLATION AT ALA-2</scope>
</reference>
<reference key="3">
    <citation type="journal article" date="1977" name="J. Biochem.">
        <title>Amino acid sequence of a cyanogen bromide fragment containing the two tryptophanyl residues of lobster arginine kinase (Homarus vulgaris).</title>
        <authorList>
            <person name="Debuire B."/>
            <person name="Han K.K."/>
            <person name="Dautrevaux M."/>
            <person name="Biserte G."/>
            <person name="Regnouf F."/>
            <person name="Kassab R."/>
        </authorList>
    </citation>
    <scope>PRELIMINARY PROTEIN SEQUENCE OF 176-233</scope>
</reference>
<reference key="4">
    <citation type="journal article" date="1975" name="Int. J. Pept. Protein Res.">
        <title>Isolation and characterization of the cyanogen bromide fragments of lobster arginine kinase (homarus vulgaris).</title>
        <authorList>
            <person name="Debuire B."/>
            <person name="Han K.K."/>
            <person name="Dautrevaux M."/>
            <person name="Biserte G."/>
        </authorList>
    </citation>
    <scope>PROTEIN SEQUENCE OF 332-342</scope>
</reference>
<reference key="5">
    <citation type="journal article" date="1972" name="C. R. Hebd. Seances Acad. Sci., D, Sci. Nat.">
        <title>Amino acid sequence of a fragment obtained by the cleavage of lobster (Homarus gammarus L.) arginine-kinase by cyanogen bromide.</title>
        <authorList>
            <person name="Han K.K."/>
            <person name="Debuire B."/>
            <person name="Dautrevaux M."/>
            <person name="Biserte G."/>
            <person name="Fattoum A."/>
            <person name="Regnouf F."/>
            <person name="Kassab R."/>
            <person name="Pradel L.A."/>
        </authorList>
    </citation>
    <scope>PRELIMINARY PARTIAL PROTEIN SEQUENCE</scope>
</reference>
<feature type="initiator methionine" description="Removed">
    <location>
        <position position="1"/>
    </location>
</feature>
<feature type="chain" id="PRO_0000211999" description="Arginine kinase">
    <location>
        <begin position="2"/>
        <end position="356"/>
    </location>
</feature>
<feature type="domain" description="Phosphagen kinase N-terminal" evidence="2">
    <location>
        <begin position="9"/>
        <end position="91"/>
    </location>
</feature>
<feature type="domain" description="Phosphagen kinase C-terminal" evidence="3">
    <location>
        <begin position="119"/>
        <end position="356"/>
    </location>
</feature>
<feature type="binding site" evidence="1">
    <location>
        <begin position="64"/>
        <end position="68"/>
    </location>
    <ligand>
        <name>L-arginine</name>
        <dbReference type="ChEBI" id="CHEBI:32682"/>
    </ligand>
</feature>
<feature type="binding site" evidence="3">
    <location>
        <begin position="122"/>
        <end position="126"/>
    </location>
    <ligand>
        <name>ATP</name>
        <dbReference type="ChEBI" id="CHEBI:30616"/>
    </ligand>
</feature>
<feature type="binding site" evidence="3">
    <location>
        <position position="185"/>
    </location>
    <ligand>
        <name>ATP</name>
        <dbReference type="ChEBI" id="CHEBI:30616"/>
    </ligand>
</feature>
<feature type="binding site" evidence="1">
    <location>
        <position position="225"/>
    </location>
    <ligand>
        <name>L-arginine</name>
        <dbReference type="ChEBI" id="CHEBI:32682"/>
    </ligand>
</feature>
<feature type="binding site" evidence="3">
    <location>
        <position position="229"/>
    </location>
    <ligand>
        <name>ATP</name>
        <dbReference type="ChEBI" id="CHEBI:30616"/>
    </ligand>
</feature>
<feature type="binding site" evidence="1">
    <location>
        <position position="271"/>
    </location>
    <ligand>
        <name>L-arginine</name>
        <dbReference type="ChEBI" id="CHEBI:32682"/>
    </ligand>
</feature>
<feature type="binding site" evidence="3">
    <location>
        <begin position="280"/>
        <end position="284"/>
    </location>
    <ligand>
        <name>ATP</name>
        <dbReference type="ChEBI" id="CHEBI:30616"/>
    </ligand>
</feature>
<feature type="binding site" evidence="3">
    <location>
        <begin position="309"/>
        <end position="314"/>
    </location>
    <ligand>
        <name>ATP</name>
        <dbReference type="ChEBI" id="CHEBI:30616"/>
    </ligand>
</feature>
<feature type="binding site" evidence="1">
    <location>
        <position position="314"/>
    </location>
    <ligand>
        <name>L-arginine</name>
        <dbReference type="ChEBI" id="CHEBI:32682"/>
    </ligand>
</feature>
<feature type="modified residue" description="N-acetylalanine" evidence="4">
    <location>
        <position position="2"/>
    </location>
</feature>
<accession>P14208</accession>
<keyword id="KW-0007">Acetylation</keyword>
<keyword id="KW-0067">ATP-binding</keyword>
<keyword id="KW-0903">Direct protein sequencing</keyword>
<keyword id="KW-0418">Kinase</keyword>
<keyword id="KW-0547">Nucleotide-binding</keyword>
<keyword id="KW-0808">Transferase</keyword>
<sequence length="356" mass="39984">MADAATIAKLEEGFKKLEAATDCKSLLKKYLSKDIFDSLKAKKTSLGATLLDVIQSGVENLDSGVGIYAPDAEAYSLFAPLFDPIIEDYHKGFKQTDKHPAKDFGDVSKFINVDPEGTFVISTRVRCGRSMEGYPFNPCLTEAQYKEMEEKVSSTLSGLEGELKGSYFPLTGMTKEVQQKLIDDHFLFKEGDRFLQAANACRYWPAGRGIYHNDNKTFLVWCNEEDHLRIISMQMGGDLGQVYRRLVSAVNDIEKRVPFSHHDRLGFLTFCPTNLGTTVRASVHIKLPKLAANREKLEEVAAKFSLQVRGTRGEHTEAEGGIYDISNKRRMGLTEFQAVKEMQDGILELIKIEKEM</sequence>